<reference key="1">
    <citation type="journal article" date="2009" name="Proc. Natl. Acad. Sci. U.S.A.">
        <title>Biogeography of the Sulfolobus islandicus pan-genome.</title>
        <authorList>
            <person name="Reno M.L."/>
            <person name="Held N.L."/>
            <person name="Fields C.J."/>
            <person name="Burke P.V."/>
            <person name="Whitaker R.J."/>
        </authorList>
    </citation>
    <scope>NUCLEOTIDE SEQUENCE [LARGE SCALE GENOMIC DNA]</scope>
    <source>
        <strain>M.14.25 / Kamchatka #1</strain>
    </source>
</reference>
<gene>
    <name evidence="1" type="primary">thi4</name>
    <name type="ordered locus">M1425_1670</name>
</gene>
<comment type="function">
    <text evidence="1">Involved in the biosynthesis of the thiazole moiety of thiamine. Catalyzes the conversion of NAD and glycine to adenosine diphosphate 5-(2-hydroxyethyl)-4-methylthiazole-2-carboxylate (ADT), an adenylated thiazole intermediate, using free sulfide as a source of sulfur.</text>
</comment>
<comment type="catalytic activity">
    <reaction evidence="1">
        <text>hydrogen sulfide + glycine + NAD(+) = ADP-5-ethyl-4-methylthiazole-2-carboxylate + nicotinamide + 3 H2O + H(+)</text>
        <dbReference type="Rhea" id="RHEA:55704"/>
        <dbReference type="ChEBI" id="CHEBI:15377"/>
        <dbReference type="ChEBI" id="CHEBI:15378"/>
        <dbReference type="ChEBI" id="CHEBI:17154"/>
        <dbReference type="ChEBI" id="CHEBI:29919"/>
        <dbReference type="ChEBI" id="CHEBI:57305"/>
        <dbReference type="ChEBI" id="CHEBI:57540"/>
        <dbReference type="ChEBI" id="CHEBI:139151"/>
        <dbReference type="EC" id="2.4.2.59"/>
    </reaction>
</comment>
<comment type="cofactor">
    <cofactor evidence="1">
        <name>Fe(2+)</name>
        <dbReference type="ChEBI" id="CHEBI:29033"/>
    </cofactor>
</comment>
<comment type="pathway">
    <text evidence="1">Cofactor biosynthesis; thiamine diphosphate biosynthesis.</text>
</comment>
<comment type="subunit">
    <text evidence="1">Homooctamer; tetramer of dimers.</text>
</comment>
<comment type="similarity">
    <text evidence="1">Belongs to the THI4 family.</text>
</comment>
<keyword id="KW-0408">Iron</keyword>
<keyword id="KW-0479">Metal-binding</keyword>
<keyword id="KW-0520">NAD</keyword>
<keyword id="KW-0784">Thiamine biosynthesis</keyword>
<keyword id="KW-0808">Transferase</keyword>
<sequence>MEVKIKQVEEVKISRYIIKETMEDWYQFVESDVVIVGAGPSGLSAAYYLAKAGLKTLVFERRLSFGGGIGGGAMLFHKLIIEKPADEILREVNVRLKEVEEGVYVVDSAEFMAKLATAAIDAGAKIIHGVTVDDVIFRENPLRVAGVAVEWTATQMASLHVDPIFISAKAVVDATGHDAEVISVAARKIPELGIVIPGEKSAYSERAEELTVINTGKVAEGLYAAGMAVTEVKGLPRMGPIFGAMVLSGKAVAEEITKDLLKSEIRT</sequence>
<dbReference type="EC" id="2.4.2.59" evidence="1"/>
<dbReference type="EMBL" id="CP001400">
    <property type="protein sequence ID" value="ACP38419.1"/>
    <property type="molecule type" value="Genomic_DNA"/>
</dbReference>
<dbReference type="RefSeq" id="WP_012711650.1">
    <property type="nucleotide sequence ID" value="NC_012588.1"/>
</dbReference>
<dbReference type="SMR" id="C3MWW9"/>
<dbReference type="GeneID" id="7794128"/>
<dbReference type="KEGG" id="sia:M1425_1670"/>
<dbReference type="HOGENOM" id="CLU_053727_2_0_2"/>
<dbReference type="UniPathway" id="UPA00060"/>
<dbReference type="Proteomes" id="UP000001350">
    <property type="component" value="Chromosome"/>
</dbReference>
<dbReference type="GO" id="GO:0005506">
    <property type="term" value="F:iron ion binding"/>
    <property type="evidence" value="ECO:0007669"/>
    <property type="project" value="UniProtKB-UniRule"/>
</dbReference>
<dbReference type="GO" id="GO:0016763">
    <property type="term" value="F:pentosyltransferase activity"/>
    <property type="evidence" value="ECO:0007669"/>
    <property type="project" value="UniProtKB-UniRule"/>
</dbReference>
<dbReference type="GO" id="GO:0009228">
    <property type="term" value="P:thiamine biosynthetic process"/>
    <property type="evidence" value="ECO:0007669"/>
    <property type="project" value="UniProtKB-KW"/>
</dbReference>
<dbReference type="GO" id="GO:0009229">
    <property type="term" value="P:thiamine diphosphate biosynthetic process"/>
    <property type="evidence" value="ECO:0007669"/>
    <property type="project" value="UniProtKB-UniRule"/>
</dbReference>
<dbReference type="GO" id="GO:0052837">
    <property type="term" value="P:thiazole biosynthetic process"/>
    <property type="evidence" value="ECO:0007669"/>
    <property type="project" value="UniProtKB-UniRule"/>
</dbReference>
<dbReference type="Gene3D" id="3.50.50.60">
    <property type="entry name" value="FAD/NAD(P)-binding domain"/>
    <property type="match status" value="1"/>
</dbReference>
<dbReference type="HAMAP" id="MF_00304">
    <property type="entry name" value="Thi4"/>
    <property type="match status" value="1"/>
</dbReference>
<dbReference type="InterPro" id="IPR036188">
    <property type="entry name" value="FAD/NAD-bd_sf"/>
</dbReference>
<dbReference type="InterPro" id="IPR002922">
    <property type="entry name" value="Thi4_fam"/>
</dbReference>
<dbReference type="InterPro" id="IPR022828">
    <property type="entry name" value="Thi4_prok"/>
</dbReference>
<dbReference type="NCBIfam" id="TIGR00292">
    <property type="entry name" value="sulfide-dependent adenosine diphosphate thiazole synthase"/>
    <property type="match status" value="1"/>
</dbReference>
<dbReference type="PANTHER" id="PTHR43422">
    <property type="entry name" value="THIAMINE THIAZOLE SYNTHASE"/>
    <property type="match status" value="1"/>
</dbReference>
<dbReference type="PANTHER" id="PTHR43422:SF3">
    <property type="entry name" value="THIAMINE THIAZOLE SYNTHASE"/>
    <property type="match status" value="1"/>
</dbReference>
<dbReference type="Pfam" id="PF01946">
    <property type="entry name" value="Thi4"/>
    <property type="match status" value="1"/>
</dbReference>
<dbReference type="PRINTS" id="PR00368">
    <property type="entry name" value="FADPNR"/>
</dbReference>
<dbReference type="PRINTS" id="PR00411">
    <property type="entry name" value="PNDRDTASEI"/>
</dbReference>
<dbReference type="SUPFAM" id="SSF51905">
    <property type="entry name" value="FAD/NAD(P)-binding domain"/>
    <property type="match status" value="1"/>
</dbReference>
<evidence type="ECO:0000255" key="1">
    <source>
        <dbReference type="HAMAP-Rule" id="MF_00304"/>
    </source>
</evidence>
<protein>
    <recommendedName>
        <fullName evidence="1">Thiamine thiazole synthase</fullName>
        <ecNumber evidence="1">2.4.2.59</ecNumber>
    </recommendedName>
</protein>
<proteinExistence type="inferred from homology"/>
<feature type="chain" id="PRO_1000205008" description="Thiamine thiazole synthase">
    <location>
        <begin position="1"/>
        <end position="267"/>
    </location>
</feature>
<feature type="binding site" description="in other chain" evidence="1">
    <location>
        <position position="41"/>
    </location>
    <ligand>
        <name>NAD(+)</name>
        <dbReference type="ChEBI" id="CHEBI:57540"/>
        <note>ligand shared between two adjacent protomers</note>
    </ligand>
</feature>
<feature type="binding site" description="in other chain" evidence="1">
    <location>
        <begin position="60"/>
        <end position="61"/>
    </location>
    <ligand>
        <name>NAD(+)</name>
        <dbReference type="ChEBI" id="CHEBI:57540"/>
        <note>ligand shared between two adjacent protomers</note>
    </ligand>
</feature>
<feature type="binding site" description="in other chain" evidence="1">
    <location>
        <position position="68"/>
    </location>
    <ligand>
        <name>NAD(+)</name>
        <dbReference type="ChEBI" id="CHEBI:57540"/>
        <note>ligand shared between two adjacent protomers</note>
    </ligand>
</feature>
<feature type="binding site" description="in other chain" evidence="1">
    <location>
        <position position="132"/>
    </location>
    <ligand>
        <name>NAD(+)</name>
        <dbReference type="ChEBI" id="CHEBI:57540"/>
        <note>ligand shared between two adjacent protomers</note>
    </ligand>
</feature>
<feature type="binding site" evidence="1">
    <location>
        <begin position="160"/>
        <end position="162"/>
    </location>
    <ligand>
        <name>NAD(+)</name>
        <dbReference type="ChEBI" id="CHEBI:57540"/>
        <note>ligand shared between two adjacent protomers</note>
    </ligand>
</feature>
<feature type="binding site" evidence="1">
    <location>
        <position position="162"/>
    </location>
    <ligand>
        <name>Fe cation</name>
        <dbReference type="ChEBI" id="CHEBI:24875"/>
        <note>ligand shared between two adjacent protomers</note>
    </ligand>
</feature>
<feature type="binding site" description="in other chain" evidence="1">
    <location>
        <position position="177"/>
    </location>
    <ligand>
        <name>Fe cation</name>
        <dbReference type="ChEBI" id="CHEBI:24875"/>
        <note>ligand shared between two adjacent protomers</note>
    </ligand>
</feature>
<feature type="binding site" description="in other chain" evidence="1">
    <location>
        <position position="227"/>
    </location>
    <ligand>
        <name>NAD(+)</name>
        <dbReference type="ChEBI" id="CHEBI:57540"/>
        <note>ligand shared between two adjacent protomers</note>
    </ligand>
</feature>
<feature type="binding site" evidence="1">
    <location>
        <position position="237"/>
    </location>
    <ligand>
        <name>glycine</name>
        <dbReference type="ChEBI" id="CHEBI:57305"/>
    </ligand>
</feature>
<organism>
    <name type="scientific">Saccharolobus islandicus (strain M.14.25 / Kamchatka #1)</name>
    <name type="common">Sulfolobus islandicus</name>
    <dbReference type="NCBI Taxonomy" id="427317"/>
    <lineage>
        <taxon>Archaea</taxon>
        <taxon>Thermoproteota</taxon>
        <taxon>Thermoprotei</taxon>
        <taxon>Sulfolobales</taxon>
        <taxon>Sulfolobaceae</taxon>
        <taxon>Saccharolobus</taxon>
    </lineage>
</organism>
<name>THI4_SACI4</name>
<accession>C3MWW9</accession>